<sequence>MLFMAGPAASWSLRPLGLHGVPQALCAVLLTVLVMKTLVLGDTKLEDLHPQSLPLNKYLNCYRCLLETEELGCLLGSDTCLTPLGSSCVTLHIKNSSGFNVMVSDCYSKEQMVHCSYTRASPVFGFWIFYQCCFLDFCNNPDNRKNSMH</sequence>
<comment type="function">
    <text>May have a role in hematopoietic cell differentiation.</text>
</comment>
<comment type="subunit">
    <text evidence="4">Forms oligomers.</text>
</comment>
<comment type="subcellular location">
    <subcellularLocation>
        <location evidence="5">Secreted</location>
    </subcellularLocation>
</comment>
<comment type="tissue specificity">
    <text evidence="3">Detected in adult brain.</text>
</comment>
<comment type="PTM">
    <text evidence="4">N-glycosylated.</text>
</comment>
<organism>
    <name type="scientific">Mus musculus</name>
    <name type="common">Mouse</name>
    <dbReference type="NCBI Taxonomy" id="10090"/>
    <lineage>
        <taxon>Eukaryota</taxon>
        <taxon>Metazoa</taxon>
        <taxon>Chordata</taxon>
        <taxon>Craniata</taxon>
        <taxon>Vertebrata</taxon>
        <taxon>Euteleostomi</taxon>
        <taxon>Mammalia</taxon>
        <taxon>Eutheria</taxon>
        <taxon>Euarchontoglires</taxon>
        <taxon>Glires</taxon>
        <taxon>Rodentia</taxon>
        <taxon>Myomorpha</taxon>
        <taxon>Muroidea</taxon>
        <taxon>Muridae</taxon>
        <taxon>Murinae</taxon>
        <taxon>Mus</taxon>
        <taxon>Mus</taxon>
    </lineage>
</organism>
<evidence type="ECO:0000250" key="1"/>
<evidence type="ECO:0000255" key="2"/>
<evidence type="ECO:0000269" key="3">
    <source>
    </source>
</evidence>
<evidence type="ECO:0000269" key="4">
    <source>
    </source>
</evidence>
<evidence type="ECO:0000305" key="5"/>
<accession>Q8K1T5</accession>
<accession>Q0D2G4</accession>
<proteinExistence type="evidence at protein level"/>
<reference key="1">
    <citation type="journal article" date="2002" name="Genomics">
        <title>Transcriptional analysis of a novel cluster of LY-6 family members in the human and mouse major histocompatibility complex: five genes with many splice forms.</title>
        <authorList>
            <person name="Mallya M."/>
            <person name="Campbell R.D."/>
            <person name="Aguado B."/>
        </authorList>
    </citation>
    <scope>NUCLEOTIDE SEQUENCE [MRNA]</scope>
    <scope>TISSUE SPECIFICITY</scope>
    <source>
        <strain>129</strain>
    </source>
</reference>
<reference key="2">
    <citation type="journal article" date="2004" name="Genome Res.">
        <title>The status, quality, and expansion of the NIH full-length cDNA project: the Mammalian Gene Collection (MGC).</title>
        <authorList>
            <consortium name="The MGC Project Team"/>
        </authorList>
    </citation>
    <scope>NUCLEOTIDE SEQUENCE [LARGE SCALE MRNA]</scope>
    <source>
        <tissue>Brain</tissue>
    </source>
</reference>
<reference key="3">
    <citation type="journal article" date="2006" name="Protein Sci.">
        <title>Characterization of the five novel Ly-6 superfamily members encoded in the MHC, and detection of cells expressing their potential ligands.</title>
        <authorList>
            <person name="Mallya M."/>
            <person name="Campbell R.D."/>
            <person name="Aguado B."/>
        </authorList>
    </citation>
    <scope>GLYCOSYLATION</scope>
    <scope>SUBUNIT</scope>
</reference>
<protein>
    <recommendedName>
        <fullName>Lymphocyte antigen 6 complex locus protein G5c</fullName>
    </recommendedName>
</protein>
<keyword id="KW-1015">Disulfide bond</keyword>
<keyword id="KW-0325">Glycoprotein</keyword>
<keyword id="KW-1185">Reference proteome</keyword>
<keyword id="KW-0964">Secreted</keyword>
<keyword id="KW-0732">Signal</keyword>
<name>LY65C_MOUSE</name>
<feature type="signal peptide" evidence="2">
    <location>
        <begin position="1"/>
        <end position="41"/>
    </location>
</feature>
<feature type="chain" id="PRO_0000323018" description="Lymphocyte antigen 6 complex locus protein G5c">
    <location>
        <begin position="42"/>
        <end position="149"/>
    </location>
</feature>
<feature type="domain" description="UPAR/Ly6">
    <location>
        <begin position="59"/>
        <end position="149"/>
    </location>
</feature>
<feature type="glycosylation site" description="N-linked (GlcNAc...) asparagine" evidence="2">
    <location>
        <position position="95"/>
    </location>
</feature>
<feature type="disulfide bond" evidence="1">
    <location>
        <begin position="61"/>
        <end position="88"/>
    </location>
</feature>
<feature type="disulfide bond" evidence="1">
    <location>
        <begin position="64"/>
        <end position="73"/>
    </location>
</feature>
<feature type="disulfide bond" evidence="1">
    <location>
        <begin position="80"/>
        <end position="106"/>
    </location>
</feature>
<feature type="disulfide bond" evidence="1">
    <location>
        <begin position="115"/>
        <end position="132"/>
    </location>
</feature>
<feature type="disulfide bond" evidence="1">
    <location>
        <begin position="133"/>
        <end position="138"/>
    </location>
</feature>
<gene>
    <name type="primary">Ly6g5c</name>
</gene>
<dbReference type="EMBL" id="AJ315552">
    <property type="protein sequence ID" value="CAC85548.1"/>
    <property type="molecule type" value="mRNA"/>
</dbReference>
<dbReference type="EMBL" id="BC111447">
    <property type="protein sequence ID" value="AAI11448.1"/>
    <property type="molecule type" value="mRNA"/>
</dbReference>
<dbReference type="EMBL" id="BC145966">
    <property type="protein sequence ID" value="AAI45967.1"/>
    <property type="molecule type" value="mRNA"/>
</dbReference>
<dbReference type="EMBL" id="BC145968">
    <property type="protein sequence ID" value="AAI45969.1"/>
    <property type="molecule type" value="mRNA"/>
</dbReference>
<dbReference type="CCDS" id="CCDS28682.1"/>
<dbReference type="RefSeq" id="NP_683749.1">
    <property type="nucleotide sequence ID" value="NM_148947.2"/>
</dbReference>
<dbReference type="FunCoup" id="Q8K1T5">
    <property type="interactions" value="15"/>
</dbReference>
<dbReference type="STRING" id="10090.ENSMUSP00000039151"/>
<dbReference type="GlyCosmos" id="Q8K1T5">
    <property type="glycosylation" value="1 site, No reported glycans"/>
</dbReference>
<dbReference type="GlyGen" id="Q8K1T5">
    <property type="glycosylation" value="1 site"/>
</dbReference>
<dbReference type="PaxDb" id="10090-ENSMUSP00000039151"/>
<dbReference type="ProteomicsDB" id="291970"/>
<dbReference type="Antibodypedia" id="50054">
    <property type="antibodies" value="25 antibodies from 13 providers"/>
</dbReference>
<dbReference type="DNASU" id="114652"/>
<dbReference type="Ensembl" id="ENSMUST00000037849.3">
    <property type="protein sequence ID" value="ENSMUSP00000039151.3"/>
    <property type="gene ID" value="ENSMUSG00000034482.3"/>
</dbReference>
<dbReference type="GeneID" id="114652"/>
<dbReference type="KEGG" id="mmu:114652"/>
<dbReference type="UCSC" id="uc008cfr.1">
    <property type="organism name" value="mouse"/>
</dbReference>
<dbReference type="AGR" id="MGI:2148974"/>
<dbReference type="CTD" id="80741"/>
<dbReference type="MGI" id="MGI:2148974">
    <property type="gene designation" value="Ly6g5c"/>
</dbReference>
<dbReference type="VEuPathDB" id="HostDB:ENSMUSG00000034482"/>
<dbReference type="eggNOG" id="ENOG502TD7Y">
    <property type="taxonomic scope" value="Eukaryota"/>
</dbReference>
<dbReference type="GeneTree" id="ENSGT00390000011513"/>
<dbReference type="HOGENOM" id="CLU_148118_0_0_1"/>
<dbReference type="InParanoid" id="Q8K1T5"/>
<dbReference type="OMA" id="FLDFCNN"/>
<dbReference type="OrthoDB" id="9449163at2759"/>
<dbReference type="PhylomeDB" id="Q8K1T5"/>
<dbReference type="TreeFam" id="TF338717"/>
<dbReference type="BioGRID-ORCS" id="114652">
    <property type="hits" value="5 hits in 78 CRISPR screens"/>
</dbReference>
<dbReference type="ChiTaRS" id="Ly6g5c">
    <property type="organism name" value="mouse"/>
</dbReference>
<dbReference type="PRO" id="PR:Q8K1T5"/>
<dbReference type="Proteomes" id="UP000000589">
    <property type="component" value="Chromosome 17"/>
</dbReference>
<dbReference type="RNAct" id="Q8K1T5">
    <property type="molecule type" value="protein"/>
</dbReference>
<dbReference type="Bgee" id="ENSMUSG00000034482">
    <property type="expression patterns" value="Expressed in mesodermal cell in embryo and 5 other cell types or tissues"/>
</dbReference>
<dbReference type="GO" id="GO:0009897">
    <property type="term" value="C:external side of plasma membrane"/>
    <property type="evidence" value="ECO:0007669"/>
    <property type="project" value="Ensembl"/>
</dbReference>
<dbReference type="GO" id="GO:0005576">
    <property type="term" value="C:extracellular region"/>
    <property type="evidence" value="ECO:0007669"/>
    <property type="project" value="UniProtKB-SubCell"/>
</dbReference>
<dbReference type="GO" id="GO:0032991">
    <property type="term" value="C:protein-containing complex"/>
    <property type="evidence" value="ECO:0000314"/>
    <property type="project" value="UniProtKB"/>
</dbReference>
<dbReference type="GO" id="GO:0042802">
    <property type="term" value="F:identical protein binding"/>
    <property type="evidence" value="ECO:0000314"/>
    <property type="project" value="UniProtKB"/>
</dbReference>
<dbReference type="CDD" id="cd23545">
    <property type="entry name" value="TFP_LU_ECD_Ly6G5c"/>
    <property type="match status" value="1"/>
</dbReference>
<dbReference type="InterPro" id="IPR016054">
    <property type="entry name" value="LY6_UPA_recep-like"/>
</dbReference>
<dbReference type="InterPro" id="IPR026110">
    <property type="entry name" value="LY6G5C"/>
</dbReference>
<dbReference type="PANTHER" id="PTHR14909">
    <property type="entry name" value="LYMPHOCYTE ANTIGEN 6 COMPLEX LOCUS PROTEIN G5C"/>
    <property type="match status" value="1"/>
</dbReference>
<dbReference type="PANTHER" id="PTHR14909:SF6">
    <property type="entry name" value="LYMPHOCYTE ANTIGEN 6 COMPLEX LOCUS PROTEIN G5C"/>
    <property type="match status" value="1"/>
</dbReference>
<dbReference type="Pfam" id="PF00021">
    <property type="entry name" value="UPAR_LY6"/>
    <property type="match status" value="1"/>
</dbReference>